<evidence type="ECO:0000255" key="1">
    <source>
        <dbReference type="HAMAP-Rule" id="MF_01062"/>
    </source>
</evidence>
<comment type="function">
    <text evidence="1">Bifunctional serine/threonine kinase and phosphorylase involved in the regulation of the phosphoenolpyruvate synthase (PEPS) by catalyzing its phosphorylation/dephosphorylation.</text>
</comment>
<comment type="catalytic activity">
    <reaction evidence="1">
        <text>[pyruvate, water dikinase] + ADP = [pyruvate, water dikinase]-phosphate + AMP + H(+)</text>
        <dbReference type="Rhea" id="RHEA:46020"/>
        <dbReference type="Rhea" id="RHEA-COMP:11425"/>
        <dbReference type="Rhea" id="RHEA-COMP:11426"/>
        <dbReference type="ChEBI" id="CHEBI:15378"/>
        <dbReference type="ChEBI" id="CHEBI:43176"/>
        <dbReference type="ChEBI" id="CHEBI:68546"/>
        <dbReference type="ChEBI" id="CHEBI:456215"/>
        <dbReference type="ChEBI" id="CHEBI:456216"/>
        <dbReference type="EC" id="2.7.11.33"/>
    </reaction>
</comment>
<comment type="catalytic activity">
    <reaction evidence="1">
        <text>[pyruvate, water dikinase]-phosphate + phosphate + H(+) = [pyruvate, water dikinase] + diphosphate</text>
        <dbReference type="Rhea" id="RHEA:48580"/>
        <dbReference type="Rhea" id="RHEA-COMP:11425"/>
        <dbReference type="Rhea" id="RHEA-COMP:11426"/>
        <dbReference type="ChEBI" id="CHEBI:15378"/>
        <dbReference type="ChEBI" id="CHEBI:33019"/>
        <dbReference type="ChEBI" id="CHEBI:43176"/>
        <dbReference type="ChEBI" id="CHEBI:43474"/>
        <dbReference type="ChEBI" id="CHEBI:68546"/>
        <dbReference type="EC" id="2.7.4.28"/>
    </reaction>
</comment>
<comment type="similarity">
    <text evidence="1">Belongs to the pyruvate, phosphate/water dikinase regulatory protein family. PSRP subfamily.</text>
</comment>
<accession>Q0BE31</accession>
<organism>
    <name type="scientific">Burkholderia ambifaria (strain ATCC BAA-244 / DSM 16087 / CCUG 44356 / LMG 19182 / AMMD)</name>
    <name type="common">Burkholderia cepacia (strain AMMD)</name>
    <dbReference type="NCBI Taxonomy" id="339670"/>
    <lineage>
        <taxon>Bacteria</taxon>
        <taxon>Pseudomonadati</taxon>
        <taxon>Pseudomonadota</taxon>
        <taxon>Betaproteobacteria</taxon>
        <taxon>Burkholderiales</taxon>
        <taxon>Burkholderiaceae</taxon>
        <taxon>Burkholderia</taxon>
        <taxon>Burkholderia cepacia complex</taxon>
    </lineage>
</organism>
<proteinExistence type="inferred from homology"/>
<name>PSRP_BURCM</name>
<sequence length="271" mass="30648">MLPTVFIVSDGTGITAETFAHSILSQFDQKFRLVRLPFVDSLEKAYATVEKINDAAVHDGRRAIVFTTLVDSESNDIVKRSNALVLDMFQRFVEPLEQELELKSSHAMGRGHQNADTEEYKTRIEAINFSLAHDDGQSNRNLSEADVILVGVSRSGKTPTSLYLAMQYGVKAANYPLIPEDFERGKLPSALTPHRDKLFGLSIDPQRLSEIRNERRPGSKYAAPENCRYEINEAEAMMRREGIKWLSSTHKSIEEIATTILQEIRLDRQSY</sequence>
<protein>
    <recommendedName>
        <fullName evidence="1">Putative phosphoenolpyruvate synthase regulatory protein</fullName>
        <shortName evidence="1">PEP synthase regulatory protein</shortName>
        <shortName evidence="1">PSRP</shortName>
        <ecNumber evidence="1">2.7.11.33</ecNumber>
        <ecNumber evidence="1">2.7.4.28</ecNumber>
    </recommendedName>
    <alternativeName>
        <fullName evidence="1">Pyruvate, water dikinase regulatory protein</fullName>
    </alternativeName>
</protein>
<keyword id="KW-0418">Kinase</keyword>
<keyword id="KW-0547">Nucleotide-binding</keyword>
<keyword id="KW-0723">Serine/threonine-protein kinase</keyword>
<keyword id="KW-0808">Transferase</keyword>
<gene>
    <name type="ordered locus">Bamb_2036</name>
</gene>
<dbReference type="EC" id="2.7.11.33" evidence="1"/>
<dbReference type="EC" id="2.7.4.28" evidence="1"/>
<dbReference type="EMBL" id="CP000440">
    <property type="protein sequence ID" value="ABI87592.1"/>
    <property type="molecule type" value="Genomic_DNA"/>
</dbReference>
<dbReference type="RefSeq" id="WP_011657274.1">
    <property type="nucleotide sequence ID" value="NZ_CP009798.1"/>
</dbReference>
<dbReference type="SMR" id="Q0BE31"/>
<dbReference type="KEGG" id="bam:Bamb_2036"/>
<dbReference type="PATRIC" id="fig|339670.21.peg.2908"/>
<dbReference type="eggNOG" id="COG1806">
    <property type="taxonomic scope" value="Bacteria"/>
</dbReference>
<dbReference type="Proteomes" id="UP000000662">
    <property type="component" value="Chromosome 1"/>
</dbReference>
<dbReference type="GO" id="GO:0043531">
    <property type="term" value="F:ADP binding"/>
    <property type="evidence" value="ECO:0007669"/>
    <property type="project" value="UniProtKB-UniRule"/>
</dbReference>
<dbReference type="GO" id="GO:0005524">
    <property type="term" value="F:ATP binding"/>
    <property type="evidence" value="ECO:0007669"/>
    <property type="project" value="InterPro"/>
</dbReference>
<dbReference type="GO" id="GO:0016776">
    <property type="term" value="F:phosphotransferase activity, phosphate group as acceptor"/>
    <property type="evidence" value="ECO:0007669"/>
    <property type="project" value="UniProtKB-UniRule"/>
</dbReference>
<dbReference type="GO" id="GO:0004674">
    <property type="term" value="F:protein serine/threonine kinase activity"/>
    <property type="evidence" value="ECO:0007669"/>
    <property type="project" value="UniProtKB-UniRule"/>
</dbReference>
<dbReference type="HAMAP" id="MF_01062">
    <property type="entry name" value="PSRP"/>
    <property type="match status" value="1"/>
</dbReference>
<dbReference type="InterPro" id="IPR005177">
    <property type="entry name" value="Kinase-pyrophosphorylase"/>
</dbReference>
<dbReference type="InterPro" id="IPR026530">
    <property type="entry name" value="PSRP"/>
</dbReference>
<dbReference type="NCBIfam" id="NF003742">
    <property type="entry name" value="PRK05339.1"/>
    <property type="match status" value="1"/>
</dbReference>
<dbReference type="PANTHER" id="PTHR31756">
    <property type="entry name" value="PYRUVATE, PHOSPHATE DIKINASE REGULATORY PROTEIN 1, CHLOROPLASTIC"/>
    <property type="match status" value="1"/>
</dbReference>
<dbReference type="PANTHER" id="PTHR31756:SF3">
    <property type="entry name" value="PYRUVATE, PHOSPHATE DIKINASE REGULATORY PROTEIN 1, CHLOROPLASTIC"/>
    <property type="match status" value="1"/>
</dbReference>
<dbReference type="Pfam" id="PF03618">
    <property type="entry name" value="Kinase-PPPase"/>
    <property type="match status" value="1"/>
</dbReference>
<reference key="1">
    <citation type="submission" date="2006-08" db="EMBL/GenBank/DDBJ databases">
        <title>Complete sequence of chromosome 1 of Burkholderia cepacia AMMD.</title>
        <authorList>
            <person name="Copeland A."/>
            <person name="Lucas S."/>
            <person name="Lapidus A."/>
            <person name="Barry K."/>
            <person name="Detter J.C."/>
            <person name="Glavina del Rio T."/>
            <person name="Hammon N."/>
            <person name="Israni S."/>
            <person name="Pitluck S."/>
            <person name="Bruce D."/>
            <person name="Chain P."/>
            <person name="Malfatti S."/>
            <person name="Shin M."/>
            <person name="Vergez L."/>
            <person name="Schmutz J."/>
            <person name="Larimer F."/>
            <person name="Land M."/>
            <person name="Hauser L."/>
            <person name="Kyrpides N."/>
            <person name="Kim E."/>
            <person name="Parke J."/>
            <person name="Coenye T."/>
            <person name="Konstantinidis K."/>
            <person name="Ramette A."/>
            <person name="Tiedje J."/>
            <person name="Richardson P."/>
        </authorList>
    </citation>
    <scope>NUCLEOTIDE SEQUENCE [LARGE SCALE GENOMIC DNA]</scope>
    <source>
        <strain>ATCC BAA-244 / DSM 16087 / CCUG 44356 / LMG 19182 / AMMD</strain>
    </source>
</reference>
<feature type="chain" id="PRO_0000316646" description="Putative phosphoenolpyruvate synthase regulatory protein">
    <location>
        <begin position="1"/>
        <end position="271"/>
    </location>
</feature>
<feature type="binding site" evidence="1">
    <location>
        <begin position="151"/>
        <end position="158"/>
    </location>
    <ligand>
        <name>ADP</name>
        <dbReference type="ChEBI" id="CHEBI:456216"/>
    </ligand>
</feature>